<keyword id="KW-1003">Cell membrane</keyword>
<keyword id="KW-0449">Lipoprotein</keyword>
<keyword id="KW-0472">Membrane</keyword>
<keyword id="KW-0564">Palmitate</keyword>
<keyword id="KW-0571">Peptide transport</keyword>
<keyword id="KW-0653">Protein transport</keyword>
<keyword id="KW-1185">Reference proteome</keyword>
<keyword id="KW-0732">Signal</keyword>
<keyword id="KW-0813">Transport</keyword>
<organism>
    <name type="scientific">Streptococcus pneumoniae serotype 4 (strain ATCC BAA-334 / TIGR4)</name>
    <dbReference type="NCBI Taxonomy" id="170187"/>
    <lineage>
        <taxon>Bacteria</taxon>
        <taxon>Bacillati</taxon>
        <taxon>Bacillota</taxon>
        <taxon>Bacilli</taxon>
        <taxon>Lactobacillales</taxon>
        <taxon>Streptococcaceae</taxon>
        <taxon>Streptococcus</taxon>
    </lineage>
</organism>
<proteinExistence type="inferred from homology"/>
<sequence>MKSSKLFALAGVTLLAATTLAACSGSGSSTKGEKTFSYIYETDPDNLNYLTTAKAATANITSNVVDGLLENDRYGNFVPSMAEDWSVSKDGLTYTYTIRKDAKWYTSEGEEYAAVKAQDFVTGLKYAADKKSDALYLVQESIKGLDAYVKGEIKDFSQVGIKALDEQTVQYTLNKPESFWNSKTTMGVLAPVNEEFLNSKGDDFAKATDPSSLLYNGPYLLKSIVTKSSVEFAKNPNYWDKDNVHVDKVKLSFWDGQDTSKPAENFKDGSLTAARLYPTSASFAELEKSMKDNIVYTQQDSITYLVGTNIDRQSYKYTSKTSDEQKASTKKALLNKDFRQAIAFGFDRTAYASQLNGQTGASKILRNLFVPPTFVQADGKNFGDMVKEKLVTYGDEWKDVNLADSQDGLYNPEKAKAEFAKAKSALQAEGVQFPIHLDMPVDQTATTKVQRVQSMKQSLEATLGADNVIIDIQQLQKDEVNNITYFAENAAGEDWDLSDNVGWGPDFADPSTYLDIIKPSVGESTKTYLGFDSGEDNVAAKKVGLYDYEKLVTEAGDETTDVAKRYDKYAAAQAWLTDSALIIPTTSRTGRPILSKMVPFTIPFALSGNKGTSEPVLYKYLELQDKAVTVDEYQKAQEKWMKEKEESNKKAQEDLAKHVK</sequence>
<protein>
    <recommendedName>
        <fullName>Oligopeptide-binding protein AliA</fullName>
    </recommendedName>
    <alternativeName>
        <fullName>Exported protein 1</fullName>
    </alternativeName>
</protein>
<feature type="signal peptide" evidence="2">
    <location>
        <begin position="1"/>
        <end position="22"/>
    </location>
</feature>
<feature type="chain" id="PRO_0000031784" description="Oligopeptide-binding protein AliA">
    <location>
        <begin position="23"/>
        <end position="660"/>
    </location>
</feature>
<feature type="region of interest" description="Disordered" evidence="1">
    <location>
        <begin position="638"/>
        <end position="660"/>
    </location>
</feature>
<feature type="lipid moiety-binding region" description="N-palmitoyl cysteine" evidence="2">
    <location>
        <position position="23"/>
    </location>
</feature>
<feature type="lipid moiety-binding region" description="S-diacylglycerol cysteine" evidence="2">
    <location>
        <position position="23"/>
    </location>
</feature>
<feature type="sequence variant" description="In strain: R6 / R800.">
    <original>F</original>
    <variation>L</variation>
    <location>
        <position position="7"/>
    </location>
</feature>
<feature type="sequence variant" description="In strain: NCTC 11906, SP-VA92, SP-496 and SP-VA96.">
    <original>G</original>
    <variation>D</variation>
    <location>
        <position position="27"/>
    </location>
</feature>
<feature type="sequence variant" description="In strain: R6 / R800 and R6x.">
    <original>T</original>
    <variation>A</variation>
    <location>
        <position position="30"/>
    </location>
</feature>
<feature type="sequence variant" description="In strain: NCTC 11906, SP-VA92, SP-496 and SP-VA96.">
    <original>E</original>
    <variation>D</variation>
    <location>
        <position position="166"/>
    </location>
</feature>
<feature type="sequence variant" description="In strain: R6 / R800 and R6x.">
    <original>V</original>
    <variation>I</variation>
    <location>
        <position position="246"/>
    </location>
</feature>
<feature type="sequence variant" description="In strain: NCTC 11906, SP-VA92, SP-496 and SP-VA96.">
    <original>L</original>
    <variation>I</variation>
    <location>
        <position position="368"/>
    </location>
</feature>
<feature type="sequence variant" description="In strain: R6 / R800, R6x, NCTC 11906, SP-VA92, SP-496 and SP-VA96.">
    <original>Q</original>
    <variation>T</variation>
    <location>
        <position position="432"/>
    </location>
</feature>
<feature type="sequence variant" description="In strain: NCTC 11906, SP-VA92, SP-496 and SP-VA96.">
    <original>T</original>
    <variation>A</variation>
    <location>
        <position position="559"/>
    </location>
</feature>
<feature type="sequence variant" description="In strain: SP-496.">
    <original>T</original>
    <variation>A</variation>
    <location>
        <position position="612"/>
    </location>
</feature>
<feature type="sequence conflict" description="In Ref. 4; AAA26952." evidence="2" ref="4">
    <original>TT</original>
    <variation>GV</variation>
    <location>
        <begin position="18"/>
        <end position="19"/>
    </location>
</feature>
<feature type="sequence conflict" description="In Ref. 4; AAA26952." evidence="2" ref="4">
    <original>L</original>
    <variation>P</variation>
    <location>
        <position position="137"/>
    </location>
</feature>
<feature type="sequence conflict" description="In Ref. 1; CAA84507." evidence="2" ref="1">
    <original>A</original>
    <variation>R</variation>
    <location>
        <position position="420"/>
    </location>
</feature>
<name>ALIA_STRPN</name>
<accession>P35592</accession>
<accession>O52228</accession>
<accession>O54620</accession>
<accession>Q54782</accession>
<dbReference type="EMBL" id="Z35135">
    <property type="protein sequence ID" value="CAA84507.1"/>
    <property type="molecule type" value="Genomic_DNA"/>
</dbReference>
<dbReference type="EMBL" id="AE005672">
    <property type="protein sequence ID" value="AAK74534.1"/>
    <property type="status" value="ALT_INIT"/>
    <property type="molecule type" value="Genomic_DNA"/>
</dbReference>
<dbReference type="EMBL" id="AF030359">
    <property type="protein sequence ID" value="AAC38676.1"/>
    <property type="molecule type" value="Genomic_DNA"/>
</dbReference>
<dbReference type="EMBL" id="AF030360">
    <property type="protein sequence ID" value="AAC38681.1"/>
    <property type="molecule type" value="Genomic_DNA"/>
</dbReference>
<dbReference type="EMBL" id="AF030361">
    <property type="protein sequence ID" value="AAC38686.1"/>
    <property type="molecule type" value="Genomic_DNA"/>
</dbReference>
<dbReference type="EMBL" id="AF030364">
    <property type="protein sequence ID" value="AAC38703.1"/>
    <property type="molecule type" value="Genomic_DNA"/>
</dbReference>
<dbReference type="EMBL" id="L20556">
    <property type="protein sequence ID" value="AAA26952.1"/>
    <property type="molecule type" value="Genomic_DNA"/>
</dbReference>
<dbReference type="PIR" id="E95042">
    <property type="entry name" value="E95042"/>
</dbReference>
<dbReference type="PIR" id="S54395">
    <property type="entry name" value="S54395"/>
</dbReference>
<dbReference type="RefSeq" id="WP_000842584.1">
    <property type="nucleotide sequence ID" value="NZ_CP155539.1"/>
</dbReference>
<dbReference type="SMR" id="P35592"/>
<dbReference type="PaxDb" id="170187-SP_0366"/>
<dbReference type="EnsemblBacteria" id="AAK74534">
    <property type="protein sequence ID" value="AAK74534"/>
    <property type="gene ID" value="SP_0366"/>
</dbReference>
<dbReference type="KEGG" id="spn:SP_0366"/>
<dbReference type="eggNOG" id="COG4166">
    <property type="taxonomic scope" value="Bacteria"/>
</dbReference>
<dbReference type="PhylomeDB" id="P35592"/>
<dbReference type="BioCyc" id="SPNE170187:G1FZB-377-MONOMER"/>
<dbReference type="Proteomes" id="UP000000585">
    <property type="component" value="Chromosome"/>
</dbReference>
<dbReference type="GO" id="GO:0043190">
    <property type="term" value="C:ATP-binding cassette (ABC) transporter complex"/>
    <property type="evidence" value="ECO:0007669"/>
    <property type="project" value="InterPro"/>
</dbReference>
<dbReference type="GO" id="GO:0042597">
    <property type="term" value="C:periplasmic space"/>
    <property type="evidence" value="ECO:0007669"/>
    <property type="project" value="UniProtKB-ARBA"/>
</dbReference>
<dbReference type="GO" id="GO:1904680">
    <property type="term" value="F:peptide transmembrane transporter activity"/>
    <property type="evidence" value="ECO:0007669"/>
    <property type="project" value="TreeGrafter"/>
</dbReference>
<dbReference type="GO" id="GO:0015833">
    <property type="term" value="P:peptide transport"/>
    <property type="evidence" value="ECO:0007669"/>
    <property type="project" value="UniProtKB-KW"/>
</dbReference>
<dbReference type="GO" id="GO:0015031">
    <property type="term" value="P:protein transport"/>
    <property type="evidence" value="ECO:0007669"/>
    <property type="project" value="UniProtKB-KW"/>
</dbReference>
<dbReference type="CDD" id="cd08504">
    <property type="entry name" value="PBP2_OppA"/>
    <property type="match status" value="1"/>
</dbReference>
<dbReference type="FunFam" id="3.10.105.10:FF:000013">
    <property type="entry name" value="Oligopeptide ABC transporter, oligopeptide-binding protein AliB"/>
    <property type="match status" value="1"/>
</dbReference>
<dbReference type="Gene3D" id="3.90.76.10">
    <property type="entry name" value="Dipeptide-binding Protein, Domain 1"/>
    <property type="match status" value="1"/>
</dbReference>
<dbReference type="Gene3D" id="3.10.105.10">
    <property type="entry name" value="Dipeptide-binding Protein, Domain 3"/>
    <property type="match status" value="1"/>
</dbReference>
<dbReference type="Gene3D" id="3.40.190.10">
    <property type="entry name" value="Periplasmic binding protein-like II"/>
    <property type="match status" value="1"/>
</dbReference>
<dbReference type="InterPro" id="IPR030678">
    <property type="entry name" value="Peptide/Ni-bd"/>
</dbReference>
<dbReference type="InterPro" id="IPR039424">
    <property type="entry name" value="SBP_5"/>
</dbReference>
<dbReference type="InterPro" id="IPR023765">
    <property type="entry name" value="SBP_5_CS"/>
</dbReference>
<dbReference type="InterPro" id="IPR000914">
    <property type="entry name" value="SBP_5_dom"/>
</dbReference>
<dbReference type="PANTHER" id="PTHR30290">
    <property type="entry name" value="PERIPLASMIC BINDING COMPONENT OF ABC TRANSPORTER"/>
    <property type="match status" value="1"/>
</dbReference>
<dbReference type="PANTHER" id="PTHR30290:SF10">
    <property type="entry name" value="PERIPLASMIC OLIGOPEPTIDE-BINDING PROTEIN-RELATED"/>
    <property type="match status" value="1"/>
</dbReference>
<dbReference type="Pfam" id="PF00496">
    <property type="entry name" value="SBP_bac_5"/>
    <property type="match status" value="1"/>
</dbReference>
<dbReference type="PIRSF" id="PIRSF002741">
    <property type="entry name" value="MppA"/>
    <property type="match status" value="1"/>
</dbReference>
<dbReference type="SUPFAM" id="SSF53850">
    <property type="entry name" value="Periplasmic binding protein-like II"/>
    <property type="match status" value="1"/>
</dbReference>
<dbReference type="PROSITE" id="PS51257">
    <property type="entry name" value="PROKAR_LIPOPROTEIN"/>
    <property type="match status" value="1"/>
</dbReference>
<dbReference type="PROSITE" id="PS01040">
    <property type="entry name" value="SBP_BACTERIAL_5"/>
    <property type="match status" value="1"/>
</dbReference>
<comment type="function">
    <text>Part of the binding-protein-dependent transport system for oligopeptides; probably an oligopeptide binding protein.</text>
</comment>
<comment type="subcellular location">
    <subcellularLocation>
        <location evidence="2">Cell membrane</location>
        <topology evidence="2">Lipid-anchor</topology>
    </subcellularLocation>
</comment>
<comment type="similarity">
    <text evidence="2">Belongs to the bacterial solute-binding protein 5 family.</text>
</comment>
<comment type="sequence caution" evidence="2">
    <conflict type="erroneous initiation">
        <sequence resource="EMBL-CDS" id="AAK74534"/>
    </conflict>
    <text>Extended N-terminus.</text>
</comment>
<gene>
    <name type="primary">aliA</name>
    <name type="synonym">exp1</name>
    <name type="synonym">plpA</name>
    <name type="ordered locus">SP_0366</name>
</gene>
<evidence type="ECO:0000256" key="1">
    <source>
        <dbReference type="SAM" id="MobiDB-lite"/>
    </source>
</evidence>
<evidence type="ECO:0000305" key="2"/>
<reference key="1">
    <citation type="journal article" date="1994" name="J. Mol. Biol.">
        <title>Three highly homologous membrane-bound lipoproteins participate in oligopeptide transport by the Ami system of the Gram-positive Streptococcus pneumoniae.</title>
        <authorList>
            <person name="Alloing G."/>
            <person name="de Philip P."/>
            <person name="Claverys J.-P."/>
        </authorList>
    </citation>
    <scope>NUCLEOTIDE SEQUENCE [GENOMIC DNA]</scope>
    <source>
        <strain>R6 / R800</strain>
    </source>
</reference>
<reference key="2">
    <citation type="journal article" date="1998" name="Mol. Microbiol.">
        <title>Recombinational exchanges at the capsular polysaccharide biosynthetic locus lead to frequent serotype changes among natural isolates of Streptococcus pneumoniae.</title>
        <authorList>
            <person name="Coffey T.J."/>
            <person name="Enright M.C."/>
            <person name="Daniels M."/>
            <person name="Morona J.K."/>
            <person name="Morona R."/>
            <person name="Hryniewicz W."/>
            <person name="Paton J.C."/>
            <person name="Spratt B.G."/>
        </authorList>
    </citation>
    <scope>NUCLEOTIDE SEQUENCE [GENOMIC DNA]</scope>
    <source>
        <strain>NCTC 11906 / Serotype 19F</strain>
        <strain>SP-496 / Serotype 19F</strain>
        <strain>SP-VA92 / Serotype 19F</strain>
        <strain>SP-VA96 / Serotype 19F</strain>
    </source>
</reference>
<reference key="3">
    <citation type="journal article" date="2001" name="Science">
        <title>Complete genome sequence of a virulent isolate of Streptococcus pneumoniae.</title>
        <authorList>
            <person name="Tettelin H."/>
            <person name="Nelson K.E."/>
            <person name="Paulsen I.T."/>
            <person name="Eisen J.A."/>
            <person name="Read T.D."/>
            <person name="Peterson S.N."/>
            <person name="Heidelberg J.F."/>
            <person name="DeBoy R.T."/>
            <person name="Haft D.H."/>
            <person name="Dodson R.J."/>
            <person name="Durkin A.S."/>
            <person name="Gwinn M.L."/>
            <person name="Kolonay J.F."/>
            <person name="Nelson W.C."/>
            <person name="Peterson J.D."/>
            <person name="Umayam L.A."/>
            <person name="White O."/>
            <person name="Salzberg S.L."/>
            <person name="Lewis M.R."/>
            <person name="Radune D."/>
            <person name="Holtzapple E.K."/>
            <person name="Khouri H.M."/>
            <person name="Wolf A.M."/>
            <person name="Utterback T.R."/>
            <person name="Hansen C.L."/>
            <person name="McDonald L.A."/>
            <person name="Feldblyum T.V."/>
            <person name="Angiuoli S.V."/>
            <person name="Dickinson T."/>
            <person name="Hickey E.K."/>
            <person name="Holt I.E."/>
            <person name="Loftus B.J."/>
            <person name="Yang F."/>
            <person name="Smith H.O."/>
            <person name="Venter J.C."/>
            <person name="Dougherty B.A."/>
            <person name="Morrison D.A."/>
            <person name="Hollingshead S.K."/>
            <person name="Fraser C.M."/>
        </authorList>
    </citation>
    <scope>NUCLEOTIDE SEQUENCE [LARGE SCALE GENOMIC DNA]</scope>
    <source>
        <strain>ATCC BAA-334 / TIGR4</strain>
    </source>
</reference>
<reference key="4">
    <citation type="journal article" date="1994" name="Mol. Microbiol.">
        <title>Peptide permeases modulate transformation in Streptococcus pneumoniae.</title>
        <authorList>
            <person name="Pearce B."/>
            <person name="Naughton A.M."/>
            <person name="Masure H.R."/>
        </authorList>
    </citation>
    <scope>NUCLEOTIDE SEQUENCE [GENOMIC DNA] OF 18-660</scope>
    <source>
        <strain>R6x</strain>
    </source>
</reference>
<reference key="5">
    <citation type="journal article" date="1993" name="Mol. Microbiol.">
        <title>Genetic identification of exported proteins in Streptococcus pneumoniae.</title>
        <authorList>
            <person name="Pearce B.J."/>
            <person name="Yin Y.B."/>
            <person name="Masure H.R."/>
        </authorList>
    </citation>
    <scope>NUCLEOTIDE SEQUENCE [GENOMIC DNA] OF 347-509</scope>
    <source>
        <strain>R6x</strain>
    </source>
</reference>